<feature type="chain" id="PRO_0000111884" description="Protein-L-isoaspartate O-methyltransferase">
    <location>
        <begin position="1"/>
        <end position="222"/>
    </location>
</feature>
<feature type="active site" evidence="1">
    <location>
        <position position="69"/>
    </location>
</feature>
<gene>
    <name evidence="1" type="primary">pcm</name>
    <name type="ordered locus">CC_1997</name>
</gene>
<protein>
    <recommendedName>
        <fullName evidence="1">Protein-L-isoaspartate O-methyltransferase</fullName>
        <ecNumber evidence="1">2.1.1.77</ecNumber>
    </recommendedName>
    <alternativeName>
        <fullName evidence="1">L-isoaspartyl protein carboxyl methyltransferase</fullName>
    </alternativeName>
    <alternativeName>
        <fullName evidence="1">Protein L-isoaspartyl methyltransferase</fullName>
    </alternativeName>
    <alternativeName>
        <fullName evidence="1">Protein-beta-aspartate methyltransferase</fullName>
        <shortName evidence="1">PIMT</shortName>
    </alternativeName>
</protein>
<dbReference type="EC" id="2.1.1.77" evidence="1"/>
<dbReference type="EMBL" id="AE005673">
    <property type="protein sequence ID" value="AAK23972.1"/>
    <property type="molecule type" value="Genomic_DNA"/>
</dbReference>
<dbReference type="PIR" id="H87496">
    <property type="entry name" value="H87496"/>
</dbReference>
<dbReference type="RefSeq" id="NP_420804.1">
    <property type="nucleotide sequence ID" value="NC_002696.2"/>
</dbReference>
<dbReference type="RefSeq" id="WP_010919863.1">
    <property type="nucleotide sequence ID" value="NC_002696.2"/>
</dbReference>
<dbReference type="SMR" id="Q9A6T6"/>
<dbReference type="STRING" id="190650.CC_1997"/>
<dbReference type="EnsemblBacteria" id="AAK23972">
    <property type="protein sequence ID" value="AAK23972"/>
    <property type="gene ID" value="CC_1997"/>
</dbReference>
<dbReference type="KEGG" id="ccr:CC_1997"/>
<dbReference type="PATRIC" id="fig|190650.5.peg.2016"/>
<dbReference type="eggNOG" id="COG2518">
    <property type="taxonomic scope" value="Bacteria"/>
</dbReference>
<dbReference type="HOGENOM" id="CLU_055432_2_0_5"/>
<dbReference type="BioCyc" id="CAULO:CC1997-MONOMER"/>
<dbReference type="Proteomes" id="UP000001816">
    <property type="component" value="Chromosome"/>
</dbReference>
<dbReference type="GO" id="GO:0005737">
    <property type="term" value="C:cytoplasm"/>
    <property type="evidence" value="ECO:0007669"/>
    <property type="project" value="UniProtKB-SubCell"/>
</dbReference>
<dbReference type="GO" id="GO:0004719">
    <property type="term" value="F:protein-L-isoaspartate (D-aspartate) O-methyltransferase activity"/>
    <property type="evidence" value="ECO:0007669"/>
    <property type="project" value="UniProtKB-UniRule"/>
</dbReference>
<dbReference type="GO" id="GO:0032259">
    <property type="term" value="P:methylation"/>
    <property type="evidence" value="ECO:0007669"/>
    <property type="project" value="UniProtKB-KW"/>
</dbReference>
<dbReference type="GO" id="GO:0036211">
    <property type="term" value="P:protein modification process"/>
    <property type="evidence" value="ECO:0007669"/>
    <property type="project" value="UniProtKB-UniRule"/>
</dbReference>
<dbReference type="GO" id="GO:0030091">
    <property type="term" value="P:protein repair"/>
    <property type="evidence" value="ECO:0007669"/>
    <property type="project" value="UniProtKB-UniRule"/>
</dbReference>
<dbReference type="CDD" id="cd02440">
    <property type="entry name" value="AdoMet_MTases"/>
    <property type="match status" value="1"/>
</dbReference>
<dbReference type="FunFam" id="3.40.50.150:FF:000010">
    <property type="entry name" value="Protein-L-isoaspartate O-methyltransferase"/>
    <property type="match status" value="1"/>
</dbReference>
<dbReference type="Gene3D" id="3.40.50.150">
    <property type="entry name" value="Vaccinia Virus protein VP39"/>
    <property type="match status" value="1"/>
</dbReference>
<dbReference type="HAMAP" id="MF_00090">
    <property type="entry name" value="PIMT"/>
    <property type="match status" value="1"/>
</dbReference>
<dbReference type="InterPro" id="IPR000682">
    <property type="entry name" value="PCMT"/>
</dbReference>
<dbReference type="InterPro" id="IPR029063">
    <property type="entry name" value="SAM-dependent_MTases_sf"/>
</dbReference>
<dbReference type="NCBIfam" id="TIGR00080">
    <property type="entry name" value="pimt"/>
    <property type="match status" value="1"/>
</dbReference>
<dbReference type="NCBIfam" id="NF001453">
    <property type="entry name" value="PRK00312.1"/>
    <property type="match status" value="1"/>
</dbReference>
<dbReference type="PANTHER" id="PTHR11579">
    <property type="entry name" value="PROTEIN-L-ISOASPARTATE O-METHYLTRANSFERASE"/>
    <property type="match status" value="1"/>
</dbReference>
<dbReference type="PANTHER" id="PTHR11579:SF0">
    <property type="entry name" value="PROTEIN-L-ISOASPARTATE(D-ASPARTATE) O-METHYLTRANSFERASE"/>
    <property type="match status" value="1"/>
</dbReference>
<dbReference type="Pfam" id="PF01135">
    <property type="entry name" value="PCMT"/>
    <property type="match status" value="1"/>
</dbReference>
<dbReference type="SUPFAM" id="SSF53335">
    <property type="entry name" value="S-adenosyl-L-methionine-dependent methyltransferases"/>
    <property type="match status" value="1"/>
</dbReference>
<dbReference type="PROSITE" id="PS01279">
    <property type="entry name" value="PCMT"/>
    <property type="match status" value="1"/>
</dbReference>
<evidence type="ECO:0000255" key="1">
    <source>
        <dbReference type="HAMAP-Rule" id="MF_00090"/>
    </source>
</evidence>
<keyword id="KW-0963">Cytoplasm</keyword>
<keyword id="KW-0489">Methyltransferase</keyword>
<keyword id="KW-1185">Reference proteome</keyword>
<keyword id="KW-0949">S-adenosyl-L-methionine</keyword>
<keyword id="KW-0808">Transferase</keyword>
<proteinExistence type="inferred from homology"/>
<sequence length="222" mass="24155">MSGGTTKAAENAKADLPRLMKALRDQGVTDPQVLKAIETTPRDLFTPDLFKDRSWEDSALPIACGQTISQPYIVGLMTQALTVEPRSRVLEIGTGSGYQTTILSKVSRLVYTIERYRTLMKEAEARFNTLGLTNVITKFGDGGEGWAEQAPFDRIMVTAAAEDDPKRLLSQLKPNGVLVAPVGKGPVQSLRRYAGDGKGGFRVEILCDVRFVPLLAGVAKDQ</sequence>
<organism>
    <name type="scientific">Caulobacter vibrioides (strain ATCC 19089 / CIP 103742 / CB 15)</name>
    <name type="common">Caulobacter crescentus</name>
    <dbReference type="NCBI Taxonomy" id="190650"/>
    <lineage>
        <taxon>Bacteria</taxon>
        <taxon>Pseudomonadati</taxon>
        <taxon>Pseudomonadota</taxon>
        <taxon>Alphaproteobacteria</taxon>
        <taxon>Caulobacterales</taxon>
        <taxon>Caulobacteraceae</taxon>
        <taxon>Caulobacter</taxon>
    </lineage>
</organism>
<comment type="function">
    <text evidence="1">Catalyzes the methyl esterification of L-isoaspartyl residues in peptides and proteins that result from spontaneous decomposition of normal L-aspartyl and L-asparaginyl residues. It plays a role in the repair and/or degradation of damaged proteins.</text>
</comment>
<comment type="catalytic activity">
    <reaction evidence="1">
        <text>[protein]-L-isoaspartate + S-adenosyl-L-methionine = [protein]-L-isoaspartate alpha-methyl ester + S-adenosyl-L-homocysteine</text>
        <dbReference type="Rhea" id="RHEA:12705"/>
        <dbReference type="Rhea" id="RHEA-COMP:12143"/>
        <dbReference type="Rhea" id="RHEA-COMP:12144"/>
        <dbReference type="ChEBI" id="CHEBI:57856"/>
        <dbReference type="ChEBI" id="CHEBI:59789"/>
        <dbReference type="ChEBI" id="CHEBI:90596"/>
        <dbReference type="ChEBI" id="CHEBI:90598"/>
        <dbReference type="EC" id="2.1.1.77"/>
    </reaction>
</comment>
<comment type="subcellular location">
    <subcellularLocation>
        <location evidence="1">Cytoplasm</location>
    </subcellularLocation>
</comment>
<comment type="similarity">
    <text evidence="1">Belongs to the methyltransferase superfamily. L-isoaspartyl/D-aspartyl protein methyltransferase family.</text>
</comment>
<name>PIMT_CAUVC</name>
<reference key="1">
    <citation type="journal article" date="2001" name="Proc. Natl. Acad. Sci. U.S.A.">
        <title>Complete genome sequence of Caulobacter crescentus.</title>
        <authorList>
            <person name="Nierman W.C."/>
            <person name="Feldblyum T.V."/>
            <person name="Laub M.T."/>
            <person name="Paulsen I.T."/>
            <person name="Nelson K.E."/>
            <person name="Eisen J.A."/>
            <person name="Heidelberg J.F."/>
            <person name="Alley M.R.K."/>
            <person name="Ohta N."/>
            <person name="Maddock J.R."/>
            <person name="Potocka I."/>
            <person name="Nelson W.C."/>
            <person name="Newton A."/>
            <person name="Stephens C."/>
            <person name="Phadke N.D."/>
            <person name="Ely B."/>
            <person name="DeBoy R.T."/>
            <person name="Dodson R.J."/>
            <person name="Durkin A.S."/>
            <person name="Gwinn M.L."/>
            <person name="Haft D.H."/>
            <person name="Kolonay J.F."/>
            <person name="Smit J."/>
            <person name="Craven M.B."/>
            <person name="Khouri H.M."/>
            <person name="Shetty J."/>
            <person name="Berry K.J."/>
            <person name="Utterback T.R."/>
            <person name="Tran K."/>
            <person name="Wolf A.M."/>
            <person name="Vamathevan J.J."/>
            <person name="Ermolaeva M.D."/>
            <person name="White O."/>
            <person name="Salzberg S.L."/>
            <person name="Venter J.C."/>
            <person name="Shapiro L."/>
            <person name="Fraser C.M."/>
        </authorList>
    </citation>
    <scope>NUCLEOTIDE SEQUENCE [LARGE SCALE GENOMIC DNA]</scope>
    <source>
        <strain>ATCC 19089 / CIP 103742 / CB 15</strain>
    </source>
</reference>
<accession>Q9A6T6</accession>